<keyword id="KW-0025">Alternative splicing</keyword>
<keyword id="KW-1003">Cell membrane</keyword>
<keyword id="KW-1015">Disulfide bond</keyword>
<keyword id="KW-0325">Glycoprotein</keyword>
<keyword id="KW-0430">Lectin</keyword>
<keyword id="KW-0472">Membrane</keyword>
<keyword id="KW-0675">Receptor</keyword>
<keyword id="KW-1185">Reference proteome</keyword>
<keyword id="KW-0735">Signal-anchor</keyword>
<keyword id="KW-0812">Transmembrane</keyword>
<keyword id="KW-1133">Transmembrane helix</keyword>
<accession>Q9D676</accession>
<accession>Q1AFZ6</accession>
<accession>Q3UUY2</accession>
<accession>Q80Z35</accession>
<accession>Q8BHH6</accession>
<organism>
    <name type="scientific">Mus musculus</name>
    <name type="common">Mouse</name>
    <dbReference type="NCBI Taxonomy" id="10090"/>
    <lineage>
        <taxon>Eukaryota</taxon>
        <taxon>Metazoa</taxon>
        <taxon>Chordata</taxon>
        <taxon>Craniata</taxon>
        <taxon>Vertebrata</taxon>
        <taxon>Euteleostomi</taxon>
        <taxon>Mammalia</taxon>
        <taxon>Eutheria</taxon>
        <taxon>Euarchontoglires</taxon>
        <taxon>Glires</taxon>
        <taxon>Rodentia</taxon>
        <taxon>Myomorpha</taxon>
        <taxon>Muroidea</taxon>
        <taxon>Muridae</taxon>
        <taxon>Murinae</taxon>
        <taxon>Mus</taxon>
        <taxon>Mus</taxon>
    </lineage>
</organism>
<protein>
    <recommendedName>
        <fullName>C-type lectin domain family 2 member G</fullName>
    </recommendedName>
    <alternativeName>
        <fullName>DDV10</fullName>
    </alternativeName>
    <alternativeName>
        <fullName>Osteoclast inhibitory lectin-related protein 1</fullName>
        <shortName>Ocil-related protein 1</shortName>
    </alternativeName>
</protein>
<feature type="chain" id="PRO_0000315289" description="C-type lectin domain family 2 member G">
    <location>
        <begin position="1"/>
        <end position="269"/>
    </location>
</feature>
<feature type="topological domain" description="Cytoplasmic" evidence="2">
    <location>
        <begin position="1"/>
        <end position="107"/>
    </location>
</feature>
<feature type="transmembrane region" description="Helical; Signal-anchor for type II membrane protein" evidence="2">
    <location>
        <begin position="108"/>
        <end position="128"/>
    </location>
</feature>
<feature type="topological domain" description="Extracellular" evidence="2">
    <location>
        <begin position="129"/>
        <end position="269"/>
    </location>
</feature>
<feature type="domain" description="C-type lectin" evidence="3">
    <location>
        <begin position="150"/>
        <end position="254"/>
    </location>
</feature>
<feature type="glycosylation site" description="N-linked (GlcNAc...) asparagine" evidence="2">
    <location>
        <position position="163"/>
    </location>
</feature>
<feature type="disulfide bond" evidence="3">
    <location>
        <begin position="171"/>
        <end position="253"/>
    </location>
</feature>
<feature type="splice variant" id="VSP_030529" description="In isoform 2." evidence="6 7">
    <location>
        <begin position="1"/>
        <end position="62"/>
    </location>
</feature>
<feature type="sequence conflict" description="In Ref. 1; AAN15948/AAN15949/AAN15950." evidence="8" ref="1">
    <original>A</original>
    <variation>V</variation>
    <location>
        <position position="128"/>
    </location>
</feature>
<feature type="sequence conflict" description="In Ref. 4; BAC65234." evidence="8" ref="4">
    <original>A</original>
    <variation>V</variation>
    <location>
        <position position="173"/>
    </location>
</feature>
<gene>
    <name type="primary">Clec2g</name>
    <name type="synonym">Clec2f</name>
    <name type="synonym">Ddv10</name>
    <name type="synonym">Ocilrp1</name>
</gene>
<name>CLC2G_MOUSE</name>
<proteinExistence type="evidence at transcript level"/>
<reference key="1">
    <citation type="journal article" date="2002" name="J. Biol. Chem.">
        <title>Osteoclast inhibitory lectin, a family of new osteoclast inhibitors.</title>
        <authorList>
            <person name="Zhou H."/>
            <person name="Kartsogiannis V."/>
            <person name="Quinn J.M.W."/>
            <person name="Ly C."/>
            <person name="Gange C."/>
            <person name="Elliott J."/>
            <person name="Ng K.W."/>
            <person name="Gillespie M.T."/>
        </authorList>
    </citation>
    <scope>NUCLEOTIDE SEQUENCE [GENOMIC DNA / MRNA] (ISOFORM 2)</scope>
    <scope>FUNCTION</scope>
    <scope>TISSUE SPECIFICITY</scope>
    <source>
        <strain>129/Sv</strain>
        <strain>C57BL/6J</strain>
    </source>
</reference>
<reference key="2">
    <citation type="journal article" date="2005" name="Science">
        <title>The transcriptional landscape of the mammalian genome.</title>
        <authorList>
            <person name="Carninci P."/>
            <person name="Kasukawa T."/>
            <person name="Katayama S."/>
            <person name="Gough J."/>
            <person name="Frith M.C."/>
            <person name="Maeda N."/>
            <person name="Oyama R."/>
            <person name="Ravasi T."/>
            <person name="Lenhard B."/>
            <person name="Wells C."/>
            <person name="Kodzius R."/>
            <person name="Shimokawa K."/>
            <person name="Bajic V.B."/>
            <person name="Brenner S.E."/>
            <person name="Batalov S."/>
            <person name="Forrest A.R."/>
            <person name="Zavolan M."/>
            <person name="Davis M.J."/>
            <person name="Wilming L.G."/>
            <person name="Aidinis V."/>
            <person name="Allen J.E."/>
            <person name="Ambesi-Impiombato A."/>
            <person name="Apweiler R."/>
            <person name="Aturaliya R.N."/>
            <person name="Bailey T.L."/>
            <person name="Bansal M."/>
            <person name="Baxter L."/>
            <person name="Beisel K.W."/>
            <person name="Bersano T."/>
            <person name="Bono H."/>
            <person name="Chalk A.M."/>
            <person name="Chiu K.P."/>
            <person name="Choudhary V."/>
            <person name="Christoffels A."/>
            <person name="Clutterbuck D.R."/>
            <person name="Crowe M.L."/>
            <person name="Dalla E."/>
            <person name="Dalrymple B.P."/>
            <person name="de Bono B."/>
            <person name="Della Gatta G."/>
            <person name="di Bernardo D."/>
            <person name="Down T."/>
            <person name="Engstrom P."/>
            <person name="Fagiolini M."/>
            <person name="Faulkner G."/>
            <person name="Fletcher C.F."/>
            <person name="Fukushima T."/>
            <person name="Furuno M."/>
            <person name="Futaki S."/>
            <person name="Gariboldi M."/>
            <person name="Georgii-Hemming P."/>
            <person name="Gingeras T.R."/>
            <person name="Gojobori T."/>
            <person name="Green R.E."/>
            <person name="Gustincich S."/>
            <person name="Harbers M."/>
            <person name="Hayashi Y."/>
            <person name="Hensch T.K."/>
            <person name="Hirokawa N."/>
            <person name="Hill D."/>
            <person name="Huminiecki L."/>
            <person name="Iacono M."/>
            <person name="Ikeo K."/>
            <person name="Iwama A."/>
            <person name="Ishikawa T."/>
            <person name="Jakt M."/>
            <person name="Kanapin A."/>
            <person name="Katoh M."/>
            <person name="Kawasawa Y."/>
            <person name="Kelso J."/>
            <person name="Kitamura H."/>
            <person name="Kitano H."/>
            <person name="Kollias G."/>
            <person name="Krishnan S.P."/>
            <person name="Kruger A."/>
            <person name="Kummerfeld S.K."/>
            <person name="Kurochkin I.V."/>
            <person name="Lareau L.F."/>
            <person name="Lazarevic D."/>
            <person name="Lipovich L."/>
            <person name="Liu J."/>
            <person name="Liuni S."/>
            <person name="McWilliam S."/>
            <person name="Madan Babu M."/>
            <person name="Madera M."/>
            <person name="Marchionni L."/>
            <person name="Matsuda H."/>
            <person name="Matsuzawa S."/>
            <person name="Miki H."/>
            <person name="Mignone F."/>
            <person name="Miyake S."/>
            <person name="Morris K."/>
            <person name="Mottagui-Tabar S."/>
            <person name="Mulder N."/>
            <person name="Nakano N."/>
            <person name="Nakauchi H."/>
            <person name="Ng P."/>
            <person name="Nilsson R."/>
            <person name="Nishiguchi S."/>
            <person name="Nishikawa S."/>
            <person name="Nori F."/>
            <person name="Ohara O."/>
            <person name="Okazaki Y."/>
            <person name="Orlando V."/>
            <person name="Pang K.C."/>
            <person name="Pavan W.J."/>
            <person name="Pavesi G."/>
            <person name="Pesole G."/>
            <person name="Petrovsky N."/>
            <person name="Piazza S."/>
            <person name="Reed J."/>
            <person name="Reid J.F."/>
            <person name="Ring B.Z."/>
            <person name="Ringwald M."/>
            <person name="Rost B."/>
            <person name="Ruan Y."/>
            <person name="Salzberg S.L."/>
            <person name="Sandelin A."/>
            <person name="Schneider C."/>
            <person name="Schoenbach C."/>
            <person name="Sekiguchi K."/>
            <person name="Semple C.A."/>
            <person name="Seno S."/>
            <person name="Sessa L."/>
            <person name="Sheng Y."/>
            <person name="Shibata Y."/>
            <person name="Shimada H."/>
            <person name="Shimada K."/>
            <person name="Silva D."/>
            <person name="Sinclair B."/>
            <person name="Sperling S."/>
            <person name="Stupka E."/>
            <person name="Sugiura K."/>
            <person name="Sultana R."/>
            <person name="Takenaka Y."/>
            <person name="Taki K."/>
            <person name="Tammoja K."/>
            <person name="Tan S.L."/>
            <person name="Tang S."/>
            <person name="Taylor M.S."/>
            <person name="Tegner J."/>
            <person name="Teichmann S.A."/>
            <person name="Ueda H.R."/>
            <person name="van Nimwegen E."/>
            <person name="Verardo R."/>
            <person name="Wei C.L."/>
            <person name="Yagi K."/>
            <person name="Yamanishi H."/>
            <person name="Zabarovsky E."/>
            <person name="Zhu S."/>
            <person name="Zimmer A."/>
            <person name="Hide W."/>
            <person name="Bult C."/>
            <person name="Grimmond S.M."/>
            <person name="Teasdale R.D."/>
            <person name="Liu E.T."/>
            <person name="Brusic V."/>
            <person name="Quackenbush J."/>
            <person name="Wahlestedt C."/>
            <person name="Mattick J.S."/>
            <person name="Hume D.A."/>
            <person name="Kai C."/>
            <person name="Sasaki D."/>
            <person name="Tomaru Y."/>
            <person name="Fukuda S."/>
            <person name="Kanamori-Katayama M."/>
            <person name="Suzuki M."/>
            <person name="Aoki J."/>
            <person name="Arakawa T."/>
            <person name="Iida J."/>
            <person name="Imamura K."/>
            <person name="Itoh M."/>
            <person name="Kato T."/>
            <person name="Kawaji H."/>
            <person name="Kawagashira N."/>
            <person name="Kawashima T."/>
            <person name="Kojima M."/>
            <person name="Kondo S."/>
            <person name="Konno H."/>
            <person name="Nakano K."/>
            <person name="Ninomiya N."/>
            <person name="Nishio T."/>
            <person name="Okada M."/>
            <person name="Plessy C."/>
            <person name="Shibata K."/>
            <person name="Shiraki T."/>
            <person name="Suzuki S."/>
            <person name="Tagami M."/>
            <person name="Waki K."/>
            <person name="Watahiki A."/>
            <person name="Okamura-Oho Y."/>
            <person name="Suzuki H."/>
            <person name="Kawai J."/>
            <person name="Hayashizaki Y."/>
        </authorList>
    </citation>
    <scope>NUCLEOTIDE SEQUENCE [LARGE SCALE MRNA] (ISOFORMS 1 AND 2)</scope>
    <source>
        <strain>C57BL/6J</strain>
        <tissue>Skin</tissue>
    </source>
</reference>
<reference key="3">
    <citation type="journal article" date="2004" name="Genome Res.">
        <title>The status, quality, and expansion of the NIH full-length cDNA project: the Mammalian Gene Collection (MGC).</title>
        <authorList>
            <consortium name="The MGC Project Team"/>
        </authorList>
    </citation>
    <scope>NUCLEOTIDE SEQUENCE [LARGE SCALE MRNA] (ISOFORM 1)</scope>
</reference>
<reference key="4">
    <citation type="journal article" date="2003" name="Endocrinology">
        <title>Expression of a novel C-type lectin in the mouse vagina.</title>
        <authorList>
            <person name="Katsu Y."/>
            <person name="Lubahn D.B."/>
            <person name="Iguchi T."/>
        </authorList>
    </citation>
    <scope>NUCLEOTIDE SEQUENCE [MRNA] OF 112-269</scope>
    <scope>INDUCTION</scope>
    <scope>TISSUE SPECIFICITY</scope>
    <source>
        <strain>C57BL/6J</strain>
        <tissue>Vagina</tissue>
    </source>
</reference>
<reference key="5">
    <citation type="journal article" date="2006" name="J. Immunol.">
        <title>Molecular and genetic basis for strain-dependent NK1.1 alloreactivity of mouse NK cells.</title>
        <authorList>
            <person name="Carlyle J.R."/>
            <person name="Mesci A."/>
            <person name="Ljutic B."/>
            <person name="Belanger S."/>
            <person name="Tai L.-H."/>
            <person name="Rousselle E."/>
            <person name="Troke A.D."/>
            <person name="Proteau M.-F."/>
            <person name="Makrigiannis A.P."/>
        </authorList>
    </citation>
    <scope>NUCLEOTIDE SEQUENCE [GENOMIC DNA] OF 196-261</scope>
    <source>
        <strain>BALB/cByJ</strain>
    </source>
</reference>
<dbReference type="EMBL" id="AY137339">
    <property type="protein sequence ID" value="AAN15948.1"/>
    <property type="molecule type" value="Genomic_DNA"/>
</dbReference>
<dbReference type="EMBL" id="AY137341">
    <property type="protein sequence ID" value="AAN15949.1"/>
    <property type="molecule type" value="mRNA"/>
</dbReference>
<dbReference type="EMBL" id="AY137342">
    <property type="protein sequence ID" value="AAN15950.1"/>
    <property type="molecule type" value="mRNA"/>
</dbReference>
<dbReference type="EMBL" id="AK014570">
    <property type="protein sequence ID" value="BAB29435.1"/>
    <property type="molecule type" value="mRNA"/>
</dbReference>
<dbReference type="EMBL" id="AK137753">
    <property type="protein sequence ID" value="BAE23491.1"/>
    <property type="molecule type" value="mRNA"/>
</dbReference>
<dbReference type="EMBL" id="BC117543">
    <property type="protein sequence ID" value="AAI17544.1"/>
    <property type="molecule type" value="mRNA"/>
</dbReference>
<dbReference type="EMBL" id="AB091386">
    <property type="protein sequence ID" value="BAC65234.1"/>
    <property type="molecule type" value="mRNA"/>
</dbReference>
<dbReference type="EMBL" id="DQ143107">
    <property type="protein sequence ID" value="ABA43358.1"/>
    <property type="molecule type" value="Genomic_DNA"/>
</dbReference>
<dbReference type="CCDS" id="CCDS20578.1">
    <molecule id="Q9D676-1"/>
</dbReference>
<dbReference type="CCDS" id="CCDS51921.1">
    <molecule id="Q9D676-2"/>
</dbReference>
<dbReference type="RefSeq" id="NP_001161695.1">
    <property type="nucleotide sequence ID" value="NM_001168223.1"/>
</dbReference>
<dbReference type="RefSeq" id="NP_001161696.1">
    <molecule id="Q9D676-2"/>
    <property type="nucleotide sequence ID" value="NM_001168224.1"/>
</dbReference>
<dbReference type="RefSeq" id="NP_001303681.1">
    <property type="nucleotide sequence ID" value="NM_001316752.1"/>
</dbReference>
<dbReference type="RefSeq" id="NP_081838.1">
    <molecule id="Q9D676-1"/>
    <property type="nucleotide sequence ID" value="NM_027562.4"/>
</dbReference>
<dbReference type="SMR" id="Q9D676"/>
<dbReference type="FunCoup" id="Q9D676">
    <property type="interactions" value="72"/>
</dbReference>
<dbReference type="STRING" id="10090.ENSMUSP00000000254"/>
<dbReference type="GlyCosmos" id="Q9D676">
    <property type="glycosylation" value="1 site, No reported glycans"/>
</dbReference>
<dbReference type="GlyGen" id="Q9D676">
    <property type="glycosylation" value="1 site"/>
</dbReference>
<dbReference type="PhosphoSitePlus" id="Q9D676"/>
<dbReference type="jPOST" id="Q9D676"/>
<dbReference type="PaxDb" id="10090-ENSMUSP00000000254"/>
<dbReference type="ProteomicsDB" id="279101">
    <molecule id="Q9D676-1"/>
</dbReference>
<dbReference type="ProteomicsDB" id="279102">
    <molecule id="Q9D676-2"/>
</dbReference>
<dbReference type="DNASU" id="70809"/>
<dbReference type="Ensembl" id="ENSMUST00000000254.14">
    <molecule id="Q9D676-1"/>
    <property type="protein sequence ID" value="ENSMUSP00000000254.8"/>
    <property type="gene ID" value="ENSMUSG00000000248.17"/>
</dbReference>
<dbReference type="Ensembl" id="ENSMUST00000075789.4">
    <molecule id="Q9D676-2"/>
    <property type="protein sequence ID" value="ENSMUSP00000075192.4"/>
    <property type="gene ID" value="ENSMUSG00000000248.17"/>
</dbReference>
<dbReference type="Ensembl" id="ENSMUST00000142388.8">
    <molecule id="Q9D676-2"/>
    <property type="protein sequence ID" value="ENSMUSP00000115140.2"/>
    <property type="gene ID" value="ENSMUSG00000000248.17"/>
</dbReference>
<dbReference type="GeneID" id="70809"/>
<dbReference type="KEGG" id="mmu:70809"/>
<dbReference type="UCSC" id="uc009eew.2">
    <molecule id="Q9D676-1"/>
    <property type="organism name" value="mouse"/>
</dbReference>
<dbReference type="AGR" id="MGI:1918059"/>
<dbReference type="CTD" id="70809"/>
<dbReference type="MGI" id="MGI:1918059">
    <property type="gene designation" value="Clec2g"/>
</dbReference>
<dbReference type="VEuPathDB" id="HostDB:ENSMUSG00000000248"/>
<dbReference type="eggNOG" id="KOG4297">
    <property type="taxonomic scope" value="Eukaryota"/>
</dbReference>
<dbReference type="GeneTree" id="ENSGT00940000155319"/>
<dbReference type="HOGENOM" id="CLU_049894_8_1_1"/>
<dbReference type="InParanoid" id="Q9D676"/>
<dbReference type="OMA" id="SWIWANG"/>
<dbReference type="OrthoDB" id="8935730at2759"/>
<dbReference type="PhylomeDB" id="Q9D676"/>
<dbReference type="TreeFam" id="TF351467"/>
<dbReference type="BioGRID-ORCS" id="70809">
    <property type="hits" value="2 hits in 79 CRISPR screens"/>
</dbReference>
<dbReference type="PRO" id="PR:Q9D676"/>
<dbReference type="Proteomes" id="UP000000589">
    <property type="component" value="Chromosome 6"/>
</dbReference>
<dbReference type="RNAct" id="Q9D676">
    <property type="molecule type" value="protein"/>
</dbReference>
<dbReference type="Bgee" id="ENSMUSG00000000248">
    <property type="expression patterns" value="Expressed in lip and 30 other cell types or tissues"/>
</dbReference>
<dbReference type="ExpressionAtlas" id="Q9D676">
    <property type="expression patterns" value="baseline and differential"/>
</dbReference>
<dbReference type="GO" id="GO:0005615">
    <property type="term" value="C:extracellular space"/>
    <property type="evidence" value="ECO:0000305"/>
    <property type="project" value="MGI"/>
</dbReference>
<dbReference type="GO" id="GO:0005886">
    <property type="term" value="C:plasma membrane"/>
    <property type="evidence" value="ECO:0007669"/>
    <property type="project" value="UniProtKB-SubCell"/>
</dbReference>
<dbReference type="GO" id="GO:0030246">
    <property type="term" value="F:carbohydrate binding"/>
    <property type="evidence" value="ECO:0007669"/>
    <property type="project" value="UniProtKB-KW"/>
</dbReference>
<dbReference type="GO" id="GO:0046703">
    <property type="term" value="F:natural killer cell lectin-like receptor binding"/>
    <property type="evidence" value="ECO:0000353"/>
    <property type="project" value="MGI"/>
</dbReference>
<dbReference type="GO" id="GO:0045671">
    <property type="term" value="P:negative regulation of osteoclast differentiation"/>
    <property type="evidence" value="ECO:0000314"/>
    <property type="project" value="MGI"/>
</dbReference>
<dbReference type="CDD" id="cd03593">
    <property type="entry name" value="CLECT_NK_receptors_like"/>
    <property type="match status" value="1"/>
</dbReference>
<dbReference type="FunFam" id="3.10.100.10:FF:000062">
    <property type="entry name" value="C-type lectin domain family 2 member D"/>
    <property type="match status" value="1"/>
</dbReference>
<dbReference type="Gene3D" id="3.10.100.10">
    <property type="entry name" value="Mannose-Binding Protein A, subunit A"/>
    <property type="match status" value="2"/>
</dbReference>
<dbReference type="InterPro" id="IPR001304">
    <property type="entry name" value="C-type_lectin-like"/>
</dbReference>
<dbReference type="InterPro" id="IPR016186">
    <property type="entry name" value="C-type_lectin-like/link_sf"/>
</dbReference>
<dbReference type="InterPro" id="IPR050828">
    <property type="entry name" value="C-type_lectin/matrix_domain"/>
</dbReference>
<dbReference type="InterPro" id="IPR016187">
    <property type="entry name" value="CTDL_fold"/>
</dbReference>
<dbReference type="InterPro" id="IPR033992">
    <property type="entry name" value="NKR-like_CTLD"/>
</dbReference>
<dbReference type="PANTHER" id="PTHR45710:SF35">
    <property type="entry name" value="C-TYPE LECTIN DOMAIN FAMILY 2 MEMBER D"/>
    <property type="match status" value="1"/>
</dbReference>
<dbReference type="PANTHER" id="PTHR45710">
    <property type="entry name" value="C-TYPE LECTIN DOMAIN-CONTAINING PROTEIN 180"/>
    <property type="match status" value="1"/>
</dbReference>
<dbReference type="Pfam" id="PF00059">
    <property type="entry name" value="Lectin_C"/>
    <property type="match status" value="1"/>
</dbReference>
<dbReference type="SMART" id="SM00034">
    <property type="entry name" value="CLECT"/>
    <property type="match status" value="1"/>
</dbReference>
<dbReference type="SUPFAM" id="SSF56436">
    <property type="entry name" value="C-type lectin-like"/>
    <property type="match status" value="2"/>
</dbReference>
<dbReference type="PROSITE" id="PS50041">
    <property type="entry name" value="C_TYPE_LECTIN_2"/>
    <property type="match status" value="1"/>
</dbReference>
<sequence>MNITRASLPMLNTTCSCRREKWNFLGRYEGTFDYWIGLHRASSKHPWMWTDNTEYNNMFVYHMNAQCLKKPEEGESSPGTGGVHSYKILQRNSLRAISPESSAKLYCCCGVIMVLTVAVVALSVALPATKTEQILINKTYAACPKNWIGVGNKCFYFSEYTSNWTFAQTFCMAQEAQLARFDNEKELNFLMRYKANFDSWIGLHRESSEHPWKWTDNTEYNNMIPIQGVETCAYLSGNGISSSRHYIPRIWICSKLNNYSLHCPTPVPV</sequence>
<comment type="function">
    <text evidence="4">Inhibits osteoclast formation.</text>
</comment>
<comment type="subcellular location">
    <subcellularLocation>
        <location evidence="1">Cell membrane</location>
        <topology evidence="1">Single-pass type II membrane protein</topology>
    </subcellularLocation>
</comment>
<comment type="alternative products">
    <event type="alternative splicing"/>
    <isoform>
        <id>Q9D676-1</id>
        <name>1</name>
        <sequence type="displayed"/>
    </isoform>
    <isoform>
        <id>Q9D676-2</id>
        <name>2</name>
        <sequence type="described" ref="VSP_030529"/>
    </isoform>
</comment>
<comment type="tissue specificity">
    <text evidence="4 5">Detected in vagina, eye, tongue, stomach and spleen.</text>
</comment>
<comment type="induction">
    <text evidence="5">Constitutively expressed in bone marrow cells. Up-regulated in vagina after 17-beta-estradiol treatment. Down-regulated after removal of ovaries.</text>
</comment>
<evidence type="ECO:0000250" key="1"/>
<evidence type="ECO:0000255" key="2"/>
<evidence type="ECO:0000255" key="3">
    <source>
        <dbReference type="PROSITE-ProRule" id="PRU00040"/>
    </source>
</evidence>
<evidence type="ECO:0000269" key="4">
    <source>
    </source>
</evidence>
<evidence type="ECO:0000269" key="5">
    <source>
    </source>
</evidence>
<evidence type="ECO:0000303" key="6">
    <source>
    </source>
</evidence>
<evidence type="ECO:0000303" key="7">
    <source>
    </source>
</evidence>
<evidence type="ECO:0000305" key="8"/>